<proteinExistence type="inferred from homology"/>
<organism>
    <name type="scientific">Prochlorococcus marinus (strain MIT 9515)</name>
    <dbReference type="NCBI Taxonomy" id="167542"/>
    <lineage>
        <taxon>Bacteria</taxon>
        <taxon>Bacillati</taxon>
        <taxon>Cyanobacteriota</taxon>
        <taxon>Cyanophyceae</taxon>
        <taxon>Synechococcales</taxon>
        <taxon>Prochlorococcaceae</taxon>
        <taxon>Prochlorococcus</taxon>
    </lineage>
</organism>
<keyword id="KW-0687">Ribonucleoprotein</keyword>
<keyword id="KW-0689">Ribosomal protein</keyword>
<keyword id="KW-0694">RNA-binding</keyword>
<keyword id="KW-0699">rRNA-binding</keyword>
<protein>
    <recommendedName>
        <fullName evidence="1">Large ribosomal subunit protein uL18</fullName>
    </recommendedName>
    <alternativeName>
        <fullName evidence="2">50S ribosomal protein L18</fullName>
    </alternativeName>
</protein>
<feature type="chain" id="PRO_1000053082" description="Large ribosomal subunit protein uL18">
    <location>
        <begin position="1"/>
        <end position="122"/>
    </location>
</feature>
<comment type="function">
    <text evidence="1">This is one of the proteins that bind and probably mediate the attachment of the 5S RNA into the large ribosomal subunit, where it forms part of the central protuberance.</text>
</comment>
<comment type="subunit">
    <text evidence="1">Part of the 50S ribosomal subunit; part of the 5S rRNA/L5/L18/L25 subcomplex. Contacts the 5S and 23S rRNAs.</text>
</comment>
<comment type="similarity">
    <text evidence="1">Belongs to the universal ribosomal protein uL18 family.</text>
</comment>
<dbReference type="EMBL" id="CP000552">
    <property type="protein sequence ID" value="ABM72932.1"/>
    <property type="molecule type" value="Genomic_DNA"/>
</dbReference>
<dbReference type="RefSeq" id="WP_011821023.1">
    <property type="nucleotide sequence ID" value="NC_008817.1"/>
</dbReference>
<dbReference type="SMR" id="A2BYS1"/>
<dbReference type="STRING" id="167542.P9515_17251"/>
<dbReference type="GeneID" id="60200353"/>
<dbReference type="KEGG" id="pmc:P9515_17251"/>
<dbReference type="eggNOG" id="COG0256">
    <property type="taxonomic scope" value="Bacteria"/>
</dbReference>
<dbReference type="HOGENOM" id="CLU_098841_0_1_3"/>
<dbReference type="OrthoDB" id="9810939at2"/>
<dbReference type="Proteomes" id="UP000001589">
    <property type="component" value="Chromosome"/>
</dbReference>
<dbReference type="GO" id="GO:0022625">
    <property type="term" value="C:cytosolic large ribosomal subunit"/>
    <property type="evidence" value="ECO:0007669"/>
    <property type="project" value="TreeGrafter"/>
</dbReference>
<dbReference type="GO" id="GO:0008097">
    <property type="term" value="F:5S rRNA binding"/>
    <property type="evidence" value="ECO:0007669"/>
    <property type="project" value="TreeGrafter"/>
</dbReference>
<dbReference type="GO" id="GO:0003735">
    <property type="term" value="F:structural constituent of ribosome"/>
    <property type="evidence" value="ECO:0007669"/>
    <property type="project" value="InterPro"/>
</dbReference>
<dbReference type="GO" id="GO:0006412">
    <property type="term" value="P:translation"/>
    <property type="evidence" value="ECO:0007669"/>
    <property type="project" value="UniProtKB-UniRule"/>
</dbReference>
<dbReference type="CDD" id="cd00432">
    <property type="entry name" value="Ribosomal_L18_L5e"/>
    <property type="match status" value="1"/>
</dbReference>
<dbReference type="FunFam" id="3.30.420.100:FF:000001">
    <property type="entry name" value="50S ribosomal protein L18"/>
    <property type="match status" value="1"/>
</dbReference>
<dbReference type="Gene3D" id="3.30.420.100">
    <property type="match status" value="1"/>
</dbReference>
<dbReference type="HAMAP" id="MF_01337_B">
    <property type="entry name" value="Ribosomal_uL18_B"/>
    <property type="match status" value="1"/>
</dbReference>
<dbReference type="InterPro" id="IPR004389">
    <property type="entry name" value="Ribosomal_uL18_bac-type"/>
</dbReference>
<dbReference type="InterPro" id="IPR005484">
    <property type="entry name" value="Ribosomal_uL18_bac/euk"/>
</dbReference>
<dbReference type="NCBIfam" id="TIGR00060">
    <property type="entry name" value="L18_bact"/>
    <property type="match status" value="1"/>
</dbReference>
<dbReference type="PANTHER" id="PTHR12899">
    <property type="entry name" value="39S RIBOSOMAL PROTEIN L18, MITOCHONDRIAL"/>
    <property type="match status" value="1"/>
</dbReference>
<dbReference type="PANTHER" id="PTHR12899:SF3">
    <property type="entry name" value="LARGE RIBOSOMAL SUBUNIT PROTEIN UL18M"/>
    <property type="match status" value="1"/>
</dbReference>
<dbReference type="Pfam" id="PF00861">
    <property type="entry name" value="Ribosomal_L18p"/>
    <property type="match status" value="1"/>
</dbReference>
<dbReference type="SUPFAM" id="SSF53137">
    <property type="entry name" value="Translational machinery components"/>
    <property type="match status" value="1"/>
</dbReference>
<evidence type="ECO:0000255" key="1">
    <source>
        <dbReference type="HAMAP-Rule" id="MF_01337"/>
    </source>
</evidence>
<evidence type="ECO:0000305" key="2"/>
<accession>A2BYS1</accession>
<reference key="1">
    <citation type="journal article" date="2007" name="PLoS Genet.">
        <title>Patterns and implications of gene gain and loss in the evolution of Prochlorococcus.</title>
        <authorList>
            <person name="Kettler G.C."/>
            <person name="Martiny A.C."/>
            <person name="Huang K."/>
            <person name="Zucker J."/>
            <person name="Coleman M.L."/>
            <person name="Rodrigue S."/>
            <person name="Chen F."/>
            <person name="Lapidus A."/>
            <person name="Ferriera S."/>
            <person name="Johnson J."/>
            <person name="Steglich C."/>
            <person name="Church G.M."/>
            <person name="Richardson P."/>
            <person name="Chisholm S.W."/>
        </authorList>
    </citation>
    <scope>NUCLEOTIDE SEQUENCE [LARGE SCALE GENOMIC DNA]</scope>
    <source>
        <strain>MIT 9515</strain>
    </source>
</reference>
<sequence>MAKISRKLQTQKRHKRLRRYLIGNKIRPRLAVFRSNNHIYAQVIDDDAQQTICSASTVDKELKEDSDKLSPNCSSSTIVGKLLAKRAIKKGIKQVIFDRGGNLYHGRVKALADAARDAGLNF</sequence>
<name>RL18_PROM5</name>
<gene>
    <name evidence="1" type="primary">rplR</name>
    <name evidence="1" type="synonym">rpl18</name>
    <name type="ordered locus">P9515_17251</name>
</gene>